<comment type="function">
    <text evidence="1">Required for vacuolar fusion. Involved in the early steps of the fusion pathway.</text>
</comment>
<comment type="subcellular location">
    <subcellularLocation>
        <location evidence="2">Vacuole membrane</location>
        <topology evidence="2">Peripheral membrane protein</topology>
    </subcellularLocation>
</comment>
<gene>
    <name type="primary">VAM10</name>
    <name type="ordered locus">YOR068C</name>
    <name type="ORF">YOR29-19</name>
</gene>
<sequence>MLFEVFGEVLASYIVSSKTKGELAFPVNNAPPDSLVAINCVVLFLRSAIGSCSGAKELIRSSALELSCSSSCGLPATDKPGSFHSGALSKSILSANEAVVSKSSLSFLSSFVDI</sequence>
<organism>
    <name type="scientific">Saccharomyces cerevisiae (strain ATCC 204508 / S288c)</name>
    <name type="common">Baker's yeast</name>
    <dbReference type="NCBI Taxonomy" id="559292"/>
    <lineage>
        <taxon>Eukaryota</taxon>
        <taxon>Fungi</taxon>
        <taxon>Dikarya</taxon>
        <taxon>Ascomycota</taxon>
        <taxon>Saccharomycotina</taxon>
        <taxon>Saccharomycetes</taxon>
        <taxon>Saccharomycetales</taxon>
        <taxon>Saccharomycetaceae</taxon>
        <taxon>Saccharomyces</taxon>
    </lineage>
</organism>
<proteinExistence type="predicted"/>
<protein>
    <recommendedName>
        <fullName>Vacuolar morphogenesis protein 10</fullName>
    </recommendedName>
</protein>
<accession>Q08474</accession>
<accession>D6W2D2</accession>
<accession>O00027</accession>
<dbReference type="EMBL" id="Z70678">
    <property type="protein sequence ID" value="CAA94553.1"/>
    <property type="molecule type" value="Genomic_DNA"/>
</dbReference>
<dbReference type="EMBL" id="Z74976">
    <property type="protein sequence ID" value="CAA99261.1"/>
    <property type="molecule type" value="Genomic_DNA"/>
</dbReference>
<dbReference type="EMBL" id="BK006948">
    <property type="protein sequence ID" value="DAA10848.1"/>
    <property type="molecule type" value="Genomic_DNA"/>
</dbReference>
<dbReference type="PIR" id="S66951">
    <property type="entry name" value="S66951"/>
</dbReference>
<dbReference type="RefSeq" id="NP_014711.1">
    <property type="nucleotide sequence ID" value="NM_001183487.1"/>
</dbReference>
<dbReference type="BioGRID" id="34467">
    <property type="interactions" value="308"/>
</dbReference>
<dbReference type="DIP" id="DIP-4164N"/>
<dbReference type="FunCoup" id="Q08474">
    <property type="interactions" value="28"/>
</dbReference>
<dbReference type="STRING" id="4932.YOR068C"/>
<dbReference type="iPTMnet" id="Q08474"/>
<dbReference type="PaxDb" id="4932-YOR068C"/>
<dbReference type="PeptideAtlas" id="Q08474"/>
<dbReference type="EnsemblFungi" id="YOR068C_mRNA">
    <property type="protein sequence ID" value="YOR068C"/>
    <property type="gene ID" value="YOR068C"/>
</dbReference>
<dbReference type="GeneID" id="854234"/>
<dbReference type="KEGG" id="sce:YOR068C"/>
<dbReference type="AGR" id="SGD:S000005594"/>
<dbReference type="SGD" id="S000005594">
    <property type="gene designation" value="VAM10"/>
</dbReference>
<dbReference type="VEuPathDB" id="FungiDB:YOR068C"/>
<dbReference type="HOGENOM" id="CLU_2122470_0_0_1"/>
<dbReference type="InParanoid" id="Q08474"/>
<dbReference type="OrthoDB" id="10325102at2759"/>
<dbReference type="BioCyc" id="YEAST:G3O-33607-MONOMER"/>
<dbReference type="BioGRID-ORCS" id="854234">
    <property type="hits" value="0 hits in 10 CRISPR screens"/>
</dbReference>
<dbReference type="PRO" id="PR:Q08474"/>
<dbReference type="Proteomes" id="UP000002311">
    <property type="component" value="Chromosome XV"/>
</dbReference>
<dbReference type="RNAct" id="Q08474">
    <property type="molecule type" value="protein"/>
</dbReference>
<dbReference type="GO" id="GO:0000329">
    <property type="term" value="C:fungal-type vacuole membrane"/>
    <property type="evidence" value="ECO:0000305"/>
    <property type="project" value="SGD"/>
</dbReference>
<dbReference type="GO" id="GO:0042144">
    <property type="term" value="P:vacuole fusion, non-autophagic"/>
    <property type="evidence" value="ECO:0000315"/>
    <property type="project" value="SGD"/>
</dbReference>
<evidence type="ECO:0000269" key="1">
    <source>
    </source>
</evidence>
<evidence type="ECO:0000305" key="2"/>
<name>VAM10_YEAST</name>
<keyword id="KW-0472">Membrane</keyword>
<keyword id="KW-1185">Reference proteome</keyword>
<keyword id="KW-0926">Vacuole</keyword>
<reference key="1">
    <citation type="journal article" date="1997" name="Yeast">
        <title>The sequence of a 54.7 kb fragment of yeast chromosome XV reveals the presence of two tRNAs and 24 new open reading frames.</title>
        <authorList>
            <person name="Valens M."/>
            <person name="Bohn C."/>
            <person name="Daignan-Fornier B."/>
            <person name="Dang V.-D."/>
            <person name="Bolotin-Fukuhara M."/>
        </authorList>
    </citation>
    <scope>NUCLEOTIDE SEQUENCE [GENOMIC DNA]</scope>
</reference>
<reference key="2">
    <citation type="journal article" date="1997" name="Nature">
        <title>The nucleotide sequence of Saccharomyces cerevisiae chromosome XV.</title>
        <authorList>
            <person name="Dujon B."/>
            <person name="Albermann K."/>
            <person name="Aldea M."/>
            <person name="Alexandraki D."/>
            <person name="Ansorge W."/>
            <person name="Arino J."/>
            <person name="Benes V."/>
            <person name="Bohn C."/>
            <person name="Bolotin-Fukuhara M."/>
            <person name="Bordonne R."/>
            <person name="Boyer J."/>
            <person name="Camasses A."/>
            <person name="Casamayor A."/>
            <person name="Casas C."/>
            <person name="Cheret G."/>
            <person name="Cziepluch C."/>
            <person name="Daignan-Fornier B."/>
            <person name="Dang V.-D."/>
            <person name="de Haan M."/>
            <person name="Delius H."/>
            <person name="Durand P."/>
            <person name="Fairhead C."/>
            <person name="Feldmann H."/>
            <person name="Gaillon L."/>
            <person name="Galisson F."/>
            <person name="Gamo F.-J."/>
            <person name="Gancedo C."/>
            <person name="Goffeau A."/>
            <person name="Goulding S.E."/>
            <person name="Grivell L.A."/>
            <person name="Habbig B."/>
            <person name="Hand N.J."/>
            <person name="Hani J."/>
            <person name="Hattenhorst U."/>
            <person name="Hebling U."/>
            <person name="Hernando Y."/>
            <person name="Herrero E."/>
            <person name="Heumann K."/>
            <person name="Hiesel R."/>
            <person name="Hilger F."/>
            <person name="Hofmann B."/>
            <person name="Hollenberg C.P."/>
            <person name="Hughes B."/>
            <person name="Jauniaux J.-C."/>
            <person name="Kalogeropoulos A."/>
            <person name="Katsoulou C."/>
            <person name="Kordes E."/>
            <person name="Lafuente M.J."/>
            <person name="Landt O."/>
            <person name="Louis E.J."/>
            <person name="Maarse A.C."/>
            <person name="Madania A."/>
            <person name="Mannhaupt G."/>
            <person name="Marck C."/>
            <person name="Martin R.P."/>
            <person name="Mewes H.-W."/>
            <person name="Michaux G."/>
            <person name="Paces V."/>
            <person name="Parle-McDermott A.G."/>
            <person name="Pearson B.M."/>
            <person name="Perrin A."/>
            <person name="Pettersson B."/>
            <person name="Poch O."/>
            <person name="Pohl T.M."/>
            <person name="Poirey R."/>
            <person name="Portetelle D."/>
            <person name="Pujol A."/>
            <person name="Purnelle B."/>
            <person name="Ramezani Rad M."/>
            <person name="Rechmann S."/>
            <person name="Schwager C."/>
            <person name="Schweizer M."/>
            <person name="Sor F."/>
            <person name="Sterky F."/>
            <person name="Tarassov I.A."/>
            <person name="Teodoru C."/>
            <person name="Tettelin H."/>
            <person name="Thierry A."/>
            <person name="Tobiasch E."/>
            <person name="Tzermia M."/>
            <person name="Uhlen M."/>
            <person name="Unseld M."/>
            <person name="Valens M."/>
            <person name="Vandenbol M."/>
            <person name="Vetter I."/>
            <person name="Vlcek C."/>
            <person name="Voet M."/>
            <person name="Volckaert G."/>
            <person name="Voss H."/>
            <person name="Wambutt R."/>
            <person name="Wedler H."/>
            <person name="Wiemann S."/>
            <person name="Winsor B."/>
            <person name="Wolfe K.H."/>
            <person name="Zollner A."/>
            <person name="Zumstein E."/>
            <person name="Kleine K."/>
        </authorList>
    </citation>
    <scope>NUCLEOTIDE SEQUENCE [LARGE SCALE GENOMIC DNA]</scope>
    <source>
        <strain>ATCC 204508 / S288c</strain>
    </source>
</reference>
<reference key="3">
    <citation type="journal article" date="2014" name="G3 (Bethesda)">
        <title>The reference genome sequence of Saccharomyces cerevisiae: Then and now.</title>
        <authorList>
            <person name="Engel S.R."/>
            <person name="Dietrich F.S."/>
            <person name="Fisk D.G."/>
            <person name="Binkley G."/>
            <person name="Balakrishnan R."/>
            <person name="Costanzo M.C."/>
            <person name="Dwight S.S."/>
            <person name="Hitz B.C."/>
            <person name="Karra K."/>
            <person name="Nash R.S."/>
            <person name="Weng S."/>
            <person name="Wong E.D."/>
            <person name="Lloyd P."/>
            <person name="Skrzypek M.S."/>
            <person name="Miyasato S.R."/>
            <person name="Simison M."/>
            <person name="Cherry J.M."/>
        </authorList>
    </citation>
    <scope>GENOME REANNOTATION</scope>
    <source>
        <strain>ATCC 204508 / S288c</strain>
    </source>
</reference>
<reference key="4">
    <citation type="journal article" date="2003" name="Proc. Natl. Acad. Sci. U.S.A.">
        <title>Vam10p defines a Sec18p-independent step of priming that allows yeast vacuole tethering.</title>
        <authorList>
            <person name="Kato M."/>
            <person name="Wickner W."/>
        </authorList>
    </citation>
    <scope>FUNCTION</scope>
</reference>
<feature type="chain" id="PRO_0000065758" description="Vacuolar morphogenesis protein 10">
    <location>
        <begin position="1"/>
        <end position="114"/>
    </location>
</feature>